<organism>
    <name type="scientific">Arabidopsis thaliana</name>
    <name type="common">Mouse-ear cress</name>
    <dbReference type="NCBI Taxonomy" id="3702"/>
    <lineage>
        <taxon>Eukaryota</taxon>
        <taxon>Viridiplantae</taxon>
        <taxon>Streptophyta</taxon>
        <taxon>Embryophyta</taxon>
        <taxon>Tracheophyta</taxon>
        <taxon>Spermatophyta</taxon>
        <taxon>Magnoliopsida</taxon>
        <taxon>eudicotyledons</taxon>
        <taxon>Gunneridae</taxon>
        <taxon>Pentapetalae</taxon>
        <taxon>rosids</taxon>
        <taxon>malvids</taxon>
        <taxon>Brassicales</taxon>
        <taxon>Brassicaceae</taxon>
        <taxon>Camelineae</taxon>
        <taxon>Arabidopsis</taxon>
    </lineage>
</organism>
<reference key="1">
    <citation type="journal article" date="2000" name="Nature">
        <title>Sequence and analysis of chromosome 1 of the plant Arabidopsis thaliana.</title>
        <authorList>
            <person name="Theologis A."/>
            <person name="Ecker J.R."/>
            <person name="Palm C.J."/>
            <person name="Federspiel N.A."/>
            <person name="Kaul S."/>
            <person name="White O."/>
            <person name="Alonso J."/>
            <person name="Altafi H."/>
            <person name="Araujo R."/>
            <person name="Bowman C.L."/>
            <person name="Brooks S.Y."/>
            <person name="Buehler E."/>
            <person name="Chan A."/>
            <person name="Chao Q."/>
            <person name="Chen H."/>
            <person name="Cheuk R.F."/>
            <person name="Chin C.W."/>
            <person name="Chung M.K."/>
            <person name="Conn L."/>
            <person name="Conway A.B."/>
            <person name="Conway A.R."/>
            <person name="Creasy T.H."/>
            <person name="Dewar K."/>
            <person name="Dunn P."/>
            <person name="Etgu P."/>
            <person name="Feldblyum T.V."/>
            <person name="Feng J.-D."/>
            <person name="Fong B."/>
            <person name="Fujii C.Y."/>
            <person name="Gill J.E."/>
            <person name="Goldsmith A.D."/>
            <person name="Haas B."/>
            <person name="Hansen N.F."/>
            <person name="Hughes B."/>
            <person name="Huizar L."/>
            <person name="Hunter J.L."/>
            <person name="Jenkins J."/>
            <person name="Johnson-Hopson C."/>
            <person name="Khan S."/>
            <person name="Khaykin E."/>
            <person name="Kim C.J."/>
            <person name="Koo H.L."/>
            <person name="Kremenetskaia I."/>
            <person name="Kurtz D.B."/>
            <person name="Kwan A."/>
            <person name="Lam B."/>
            <person name="Langin-Hooper S."/>
            <person name="Lee A."/>
            <person name="Lee J.M."/>
            <person name="Lenz C.A."/>
            <person name="Li J.H."/>
            <person name="Li Y.-P."/>
            <person name="Lin X."/>
            <person name="Liu S.X."/>
            <person name="Liu Z.A."/>
            <person name="Luros J.S."/>
            <person name="Maiti R."/>
            <person name="Marziali A."/>
            <person name="Militscher J."/>
            <person name="Miranda M."/>
            <person name="Nguyen M."/>
            <person name="Nierman W.C."/>
            <person name="Osborne B.I."/>
            <person name="Pai G."/>
            <person name="Peterson J."/>
            <person name="Pham P.K."/>
            <person name="Rizzo M."/>
            <person name="Rooney T."/>
            <person name="Rowley D."/>
            <person name="Sakano H."/>
            <person name="Salzberg S.L."/>
            <person name="Schwartz J.R."/>
            <person name="Shinn P."/>
            <person name="Southwick A.M."/>
            <person name="Sun H."/>
            <person name="Tallon L.J."/>
            <person name="Tambunga G."/>
            <person name="Toriumi M.J."/>
            <person name="Town C.D."/>
            <person name="Utterback T."/>
            <person name="Van Aken S."/>
            <person name="Vaysberg M."/>
            <person name="Vysotskaia V.S."/>
            <person name="Walker M."/>
            <person name="Wu D."/>
            <person name="Yu G."/>
            <person name="Fraser C.M."/>
            <person name="Venter J.C."/>
            <person name="Davis R.W."/>
        </authorList>
    </citation>
    <scope>NUCLEOTIDE SEQUENCE [LARGE SCALE GENOMIC DNA]</scope>
    <source>
        <strain>cv. Columbia</strain>
    </source>
</reference>
<reference key="2">
    <citation type="journal article" date="2017" name="Plant J.">
        <title>Araport11: a complete reannotation of the Arabidopsis thaliana reference genome.</title>
        <authorList>
            <person name="Cheng C.Y."/>
            <person name="Krishnakumar V."/>
            <person name="Chan A.P."/>
            <person name="Thibaud-Nissen F."/>
            <person name="Schobel S."/>
            <person name="Town C.D."/>
        </authorList>
    </citation>
    <scope>GENOME REANNOTATION</scope>
    <source>
        <strain>cv. Columbia</strain>
    </source>
</reference>
<reference key="3">
    <citation type="journal article" date="2003" name="Science">
        <title>Empirical analysis of transcriptional activity in the Arabidopsis genome.</title>
        <authorList>
            <person name="Yamada K."/>
            <person name="Lim J."/>
            <person name="Dale J.M."/>
            <person name="Chen H."/>
            <person name="Shinn P."/>
            <person name="Palm C.J."/>
            <person name="Southwick A.M."/>
            <person name="Wu H.C."/>
            <person name="Kim C.J."/>
            <person name="Nguyen M."/>
            <person name="Pham P.K."/>
            <person name="Cheuk R.F."/>
            <person name="Karlin-Newmann G."/>
            <person name="Liu S.X."/>
            <person name="Lam B."/>
            <person name="Sakano H."/>
            <person name="Wu T."/>
            <person name="Yu G."/>
            <person name="Miranda M."/>
            <person name="Quach H.L."/>
            <person name="Tripp M."/>
            <person name="Chang C.H."/>
            <person name="Lee J.M."/>
            <person name="Toriumi M.J."/>
            <person name="Chan M.M."/>
            <person name="Tang C.C."/>
            <person name="Onodera C.S."/>
            <person name="Deng J.M."/>
            <person name="Akiyama K."/>
            <person name="Ansari Y."/>
            <person name="Arakawa T."/>
            <person name="Banh J."/>
            <person name="Banno F."/>
            <person name="Bowser L."/>
            <person name="Brooks S.Y."/>
            <person name="Carninci P."/>
            <person name="Chao Q."/>
            <person name="Choy N."/>
            <person name="Enju A."/>
            <person name="Goldsmith A.D."/>
            <person name="Gurjal M."/>
            <person name="Hansen N.F."/>
            <person name="Hayashizaki Y."/>
            <person name="Johnson-Hopson C."/>
            <person name="Hsuan V.W."/>
            <person name="Iida K."/>
            <person name="Karnes M."/>
            <person name="Khan S."/>
            <person name="Koesema E."/>
            <person name="Ishida J."/>
            <person name="Jiang P.X."/>
            <person name="Jones T."/>
            <person name="Kawai J."/>
            <person name="Kamiya A."/>
            <person name="Meyers C."/>
            <person name="Nakajima M."/>
            <person name="Narusaka M."/>
            <person name="Seki M."/>
            <person name="Sakurai T."/>
            <person name="Satou M."/>
            <person name="Tamse R."/>
            <person name="Vaysberg M."/>
            <person name="Wallender E.K."/>
            <person name="Wong C."/>
            <person name="Yamamura Y."/>
            <person name="Yuan S."/>
            <person name="Shinozaki K."/>
            <person name="Davis R.W."/>
            <person name="Theologis A."/>
            <person name="Ecker J.R."/>
        </authorList>
    </citation>
    <scope>NUCLEOTIDE SEQUENCE [LARGE SCALE MRNA]</scope>
    <source>
        <strain>cv. Columbia</strain>
    </source>
</reference>
<reference key="4">
    <citation type="submission" date="2005-03" db="EMBL/GenBank/DDBJ databases">
        <title>Large-scale analysis of RIKEN Arabidopsis full-length (RAFL) cDNAs.</title>
        <authorList>
            <person name="Totoki Y."/>
            <person name="Seki M."/>
            <person name="Ishida J."/>
            <person name="Nakajima M."/>
            <person name="Enju A."/>
            <person name="Kamiya A."/>
            <person name="Narusaka M."/>
            <person name="Shin-i T."/>
            <person name="Nakagawa M."/>
            <person name="Sakamoto N."/>
            <person name="Oishi K."/>
            <person name="Kohara Y."/>
            <person name="Kobayashi M."/>
            <person name="Toyoda A."/>
            <person name="Sakaki Y."/>
            <person name="Sakurai T."/>
            <person name="Iida K."/>
            <person name="Akiyama K."/>
            <person name="Satou M."/>
            <person name="Toyoda T."/>
            <person name="Konagaya A."/>
            <person name="Carninci P."/>
            <person name="Kawai J."/>
            <person name="Hayashizaki Y."/>
            <person name="Shinozaki K."/>
        </authorList>
    </citation>
    <scope>NUCLEOTIDE SEQUENCE [LARGE SCALE MRNA] OF 1-423</scope>
    <source>
        <strain>cv. Columbia</strain>
    </source>
</reference>
<dbReference type="EMBL" id="AC034107">
    <property type="protein sequence ID" value="AAF97818.1"/>
    <property type="molecule type" value="Genomic_DNA"/>
</dbReference>
<dbReference type="EMBL" id="CP002684">
    <property type="protein sequence ID" value="AEE29662.1"/>
    <property type="molecule type" value="Genomic_DNA"/>
</dbReference>
<dbReference type="EMBL" id="AY057688">
    <property type="protein sequence ID" value="AAL15319.1"/>
    <property type="molecule type" value="mRNA"/>
</dbReference>
<dbReference type="EMBL" id="BT002213">
    <property type="protein sequence ID" value="AAN72225.1"/>
    <property type="molecule type" value="mRNA"/>
</dbReference>
<dbReference type="EMBL" id="AK222109">
    <property type="protein sequence ID" value="BAD95057.1"/>
    <property type="status" value="ALT_SEQ"/>
    <property type="molecule type" value="mRNA"/>
</dbReference>
<dbReference type="PIR" id="D86315">
    <property type="entry name" value="D86315"/>
</dbReference>
<dbReference type="RefSeq" id="NP_564043.1">
    <property type="nucleotide sequence ID" value="NM_101662.3"/>
</dbReference>
<dbReference type="RefSeq" id="NP_564044.1">
    <property type="nucleotide sequence ID" value="NM_101663.2"/>
</dbReference>
<dbReference type="SMR" id="Q56WD3"/>
<dbReference type="STRING" id="3702.Q56WD3"/>
<dbReference type="PaxDb" id="3702-AT1G18000.1"/>
<dbReference type="EnsemblPlants" id="AT1G18000.1">
    <property type="protein sequence ID" value="AT1G18000.1"/>
    <property type="gene ID" value="AT1G18000"/>
</dbReference>
<dbReference type="EnsemblPlants" id="AT1G18010.1">
    <property type="protein sequence ID" value="AT1G18010.1"/>
    <property type="gene ID" value="AT1G18010"/>
</dbReference>
<dbReference type="GeneID" id="838380"/>
<dbReference type="Gramene" id="AT1G18000.1">
    <property type="protein sequence ID" value="AT1G18000.1"/>
    <property type="gene ID" value="AT1G18000"/>
</dbReference>
<dbReference type="Gramene" id="AT1G18010.1">
    <property type="protein sequence ID" value="AT1G18010.1"/>
    <property type="gene ID" value="AT1G18010"/>
</dbReference>
<dbReference type="KEGG" id="ath:AT1G18000"/>
<dbReference type="KEGG" id="ath:AT1G18010"/>
<dbReference type="Araport" id="AT1G18000"/>
<dbReference type="TAIR" id="AT1G18000"/>
<dbReference type="eggNOG" id="KOG3098">
    <property type="taxonomic scope" value="Eukaryota"/>
</dbReference>
<dbReference type="HOGENOM" id="CLU_030884_1_2_1"/>
<dbReference type="InParanoid" id="Q56WD3"/>
<dbReference type="OMA" id="AYWFMGA"/>
<dbReference type="OrthoDB" id="196103at2759"/>
<dbReference type="PhylomeDB" id="Q56WD3"/>
<dbReference type="PRO" id="PR:Q56WD3"/>
<dbReference type="Proteomes" id="UP000006548">
    <property type="component" value="Chromosome 1"/>
</dbReference>
<dbReference type="ExpressionAtlas" id="Q56WD3">
    <property type="expression patterns" value="baseline"/>
</dbReference>
<dbReference type="GO" id="GO:0016020">
    <property type="term" value="C:membrane"/>
    <property type="evidence" value="ECO:0007669"/>
    <property type="project" value="UniProtKB-SubCell"/>
</dbReference>
<dbReference type="CDD" id="cd06178">
    <property type="entry name" value="MFS_unc93-like"/>
    <property type="match status" value="1"/>
</dbReference>
<dbReference type="Gene3D" id="1.20.1250.20">
    <property type="entry name" value="MFS general substrate transporter like domains"/>
    <property type="match status" value="1"/>
</dbReference>
<dbReference type="InterPro" id="IPR010291">
    <property type="entry name" value="Ion_channel_UNC-93"/>
</dbReference>
<dbReference type="InterPro" id="IPR036259">
    <property type="entry name" value="MFS_trans_sf"/>
</dbReference>
<dbReference type="InterPro" id="IPR051617">
    <property type="entry name" value="UNC-93-like_regulator"/>
</dbReference>
<dbReference type="PANTHER" id="PTHR23294">
    <property type="entry name" value="ET TRANSLATION PRODUCT-RELATED"/>
    <property type="match status" value="1"/>
</dbReference>
<dbReference type="PANTHER" id="PTHR23294:SF59">
    <property type="entry name" value="UNC93-LIKE PROTEIN C922.05C"/>
    <property type="match status" value="1"/>
</dbReference>
<dbReference type="Pfam" id="PF05978">
    <property type="entry name" value="UNC-93"/>
    <property type="match status" value="1"/>
</dbReference>
<dbReference type="SUPFAM" id="SSF103473">
    <property type="entry name" value="MFS general substrate transporter"/>
    <property type="match status" value="1"/>
</dbReference>
<protein>
    <recommendedName>
        <fullName>UNC93-like protein 1</fullName>
    </recommendedName>
</protein>
<evidence type="ECO:0000255" key="1"/>
<evidence type="ECO:0000256" key="2">
    <source>
        <dbReference type="SAM" id="MobiDB-lite"/>
    </source>
</evidence>
<evidence type="ECO:0000305" key="3"/>
<proteinExistence type="evidence at transcript level"/>
<accession>Q56WD3</accession>
<accession>Q9LDH5</accession>
<comment type="subcellular location">
    <subcellularLocation>
        <location evidence="3">Membrane</location>
        <topology evidence="3">Multi-pass membrane protein</topology>
    </subcellularLocation>
</comment>
<comment type="similarity">
    <text evidence="3">Belongs to the unc-93 family.</text>
</comment>
<comment type="sequence caution" evidence="3">
    <conflict type="miscellaneous discrepancy">
        <sequence resource="EMBL-CDS" id="BAD95057"/>
    </conflict>
    <text>Wrong choice of frame.</text>
</comment>
<gene>
    <name type="ordered locus">At1g18000</name>
    <name type="ORF">T10F20.1</name>
</gene>
<name>UN931_ARATH</name>
<feature type="chain" id="PRO_0000416685" description="UNC93-like protein 1">
    <location>
        <begin position="1"/>
        <end position="459"/>
    </location>
</feature>
<feature type="transmembrane region" description="Helical" evidence="1">
    <location>
        <begin position="38"/>
        <end position="58"/>
    </location>
</feature>
<feature type="transmembrane region" description="Helical" evidence="1">
    <location>
        <begin position="73"/>
        <end position="93"/>
    </location>
</feature>
<feature type="transmembrane region" description="Helical" evidence="1">
    <location>
        <begin position="96"/>
        <end position="116"/>
    </location>
</feature>
<feature type="transmembrane region" description="Helical" evidence="1">
    <location>
        <begin position="122"/>
        <end position="142"/>
    </location>
</feature>
<feature type="transmembrane region" description="Helical" evidence="1">
    <location>
        <begin position="159"/>
        <end position="179"/>
    </location>
</feature>
<feature type="transmembrane region" description="Helical" evidence="1">
    <location>
        <begin position="195"/>
        <end position="215"/>
    </location>
</feature>
<feature type="transmembrane region" description="Helical" evidence="1">
    <location>
        <begin position="251"/>
        <end position="271"/>
    </location>
</feature>
<feature type="transmembrane region" description="Helical" evidence="1">
    <location>
        <begin position="287"/>
        <end position="307"/>
    </location>
</feature>
<feature type="transmembrane region" description="Helical" evidence="1">
    <location>
        <begin position="314"/>
        <end position="334"/>
    </location>
</feature>
<feature type="transmembrane region" description="Helical" evidence="1">
    <location>
        <begin position="355"/>
        <end position="375"/>
    </location>
</feature>
<feature type="transmembrane region" description="Helical" evidence="1">
    <location>
        <begin position="425"/>
        <end position="445"/>
    </location>
</feature>
<feature type="region of interest" description="Disordered" evidence="2">
    <location>
        <begin position="1"/>
        <end position="26"/>
    </location>
</feature>
<sequence length="459" mass="49970">MNVRDEGKTTAEKHGGGEENKSPENKWRFNSPLAQVSLMGFVCFCCPGMFNALSGMGGGGQVDPTAANNANTAVYTAFTVFGLLGGGFYNVLGPRLTLAAGCSTYVLYAGSFLYYNHHHHQAFAIVAGALLGCGAGLLWAGEGAVMTSYPPPHRKGTYIALFWSIFNLGGVIGGLIPFILNYQRSSAASVNDSTYIAFMCFMFAGVLLSFGILPATSVIRNDGSRCSAVKYSRPSTEAAAVLRLFLDRKMLLIVPAAWASNFFYSYQFNNVNGLLFNLRTRGFNNVFYWGAQMAGSIAIGYVMDFSFKSRRARGFTGISLVAVIGTIIWAGGLANQHGYSLDKLPEKKLDFKDSGIEFAGPFVLYMSYGLLDAMYQSMVYWLIGALADDSQTLSRYSGFYKGVQSAGAAVAWQVDTRKVPLMSQLIVNWSLTTVSYPLLVLLVYFYVKNDNDDDSNDKV</sequence>
<keyword id="KW-0472">Membrane</keyword>
<keyword id="KW-1185">Reference proteome</keyword>
<keyword id="KW-0812">Transmembrane</keyword>
<keyword id="KW-1133">Transmembrane helix</keyword>